<feature type="chain" id="PRO_0000274584" description="Speckle-type POZ protein">
    <location>
        <begin position="1"/>
        <end position="374"/>
    </location>
</feature>
<feature type="domain" description="MATH" evidence="3">
    <location>
        <begin position="31"/>
        <end position="161"/>
    </location>
</feature>
<feature type="domain" description="BTB" evidence="2">
    <location>
        <begin position="173"/>
        <end position="297"/>
    </location>
</feature>
<feature type="region of interest" description="Required for nuclear localization" evidence="1">
    <location>
        <begin position="71"/>
        <end position="191"/>
    </location>
</feature>
<feature type="region of interest" description="Homodimerization" evidence="1">
    <location>
        <begin position="297"/>
        <end position="355"/>
    </location>
</feature>
<comment type="function">
    <text evidence="1">Component of a cullin-RING-based BCR (BTB-CUL3-RBX1) E3 ubiquitin-protein ligase complex that mediates the ubiquitination of target proteins, leading most often to their proteasomal degradation.</text>
</comment>
<comment type="pathway">
    <text>Protein modification; protein ubiquitination.</text>
</comment>
<comment type="subunit">
    <text evidence="1">Homodimer. Part of cullin-RING-based BCR (BTB-CUL3-RBX1) E3 ubiquitin-protein ligase complexes that contain CUL3 and SPOP, plus a target protein (By similarity).</text>
</comment>
<comment type="subcellular location">
    <subcellularLocation>
        <location evidence="1">Nucleus</location>
    </subcellularLocation>
    <subcellularLocation>
        <location evidence="1">Nucleus speckle</location>
    </subcellularLocation>
</comment>
<comment type="domain">
    <text evidence="1">The BTB (POZ) domain mediates dimerization and interaction with CUL3.</text>
</comment>
<comment type="domain">
    <text evidence="1">The MATH domain mediates interaction with protein-ubiquitin ligase substrates.</text>
</comment>
<comment type="similarity">
    <text evidence="4">Belongs to the Tdpoz family.</text>
</comment>
<proteinExistence type="evidence at transcript level"/>
<dbReference type="EMBL" id="BC053276">
    <property type="protein sequence ID" value="AAH53276.1"/>
    <property type="molecule type" value="mRNA"/>
</dbReference>
<dbReference type="RefSeq" id="NP_957424.1">
    <property type="nucleotide sequence ID" value="NM_201130.2"/>
</dbReference>
<dbReference type="RefSeq" id="XP_068071425.1">
    <property type="nucleotide sequence ID" value="XM_068215324.1"/>
</dbReference>
<dbReference type="SMR" id="Q7T330"/>
<dbReference type="ELM" id="Q7T330"/>
<dbReference type="FunCoup" id="Q7T330">
    <property type="interactions" value="1627"/>
</dbReference>
<dbReference type="STRING" id="7955.ENSDARP00000130146"/>
<dbReference type="PaxDb" id="7955-ENSDARP00000127981"/>
<dbReference type="Ensembl" id="ENSDART00000159457">
    <property type="protein sequence ID" value="ENSDARP00000135804"/>
    <property type="gene ID" value="ENSDARG00000100519"/>
</dbReference>
<dbReference type="Ensembl" id="ENSDART00000163473">
    <property type="protein sequence ID" value="ENSDARP00000130146"/>
    <property type="gene ID" value="ENSDARG00000100519"/>
</dbReference>
<dbReference type="Ensembl" id="ENSDART00000193532">
    <property type="protein sequence ID" value="ENSDARP00000152225"/>
    <property type="gene ID" value="ENSDARG00000100519"/>
</dbReference>
<dbReference type="GeneID" id="100005514"/>
<dbReference type="KEGG" id="dre:100005514"/>
<dbReference type="AGR" id="ZFIN:ZDB-GENE-040426-1378"/>
<dbReference type="CTD" id="8405"/>
<dbReference type="ZFIN" id="ZDB-GENE-040426-1378">
    <property type="gene designation" value="spop"/>
</dbReference>
<dbReference type="eggNOG" id="KOG1987">
    <property type="taxonomic scope" value="Eukaryota"/>
</dbReference>
<dbReference type="HOGENOM" id="CLU_004253_2_0_1"/>
<dbReference type="InParanoid" id="Q7T330"/>
<dbReference type="OMA" id="IKFNYMW"/>
<dbReference type="OrthoDB" id="6359816at2759"/>
<dbReference type="PhylomeDB" id="Q7T330"/>
<dbReference type="TreeFam" id="TF313419"/>
<dbReference type="Reactome" id="R-DRE-5632684">
    <property type="pathway name" value="Hedgehog 'on' state"/>
</dbReference>
<dbReference type="UniPathway" id="UPA00143"/>
<dbReference type="PRO" id="PR:Q7T330"/>
<dbReference type="Proteomes" id="UP000000437">
    <property type="component" value="Chromosome 3"/>
</dbReference>
<dbReference type="Bgee" id="ENSDARG00000100519">
    <property type="expression patterns" value="Expressed in retina and 27 other cell types or tissues"/>
</dbReference>
<dbReference type="ExpressionAtlas" id="Q7T330">
    <property type="expression patterns" value="baseline"/>
</dbReference>
<dbReference type="GO" id="GO:0031463">
    <property type="term" value="C:Cul3-RING ubiquitin ligase complex"/>
    <property type="evidence" value="ECO:0000250"/>
    <property type="project" value="UniProtKB"/>
</dbReference>
<dbReference type="GO" id="GO:0005737">
    <property type="term" value="C:cytoplasm"/>
    <property type="evidence" value="ECO:0000318"/>
    <property type="project" value="GO_Central"/>
</dbReference>
<dbReference type="GO" id="GO:0016607">
    <property type="term" value="C:nuclear speck"/>
    <property type="evidence" value="ECO:0007669"/>
    <property type="project" value="UniProtKB-SubCell"/>
</dbReference>
<dbReference type="GO" id="GO:0005634">
    <property type="term" value="C:nucleus"/>
    <property type="evidence" value="ECO:0000250"/>
    <property type="project" value="UniProtKB"/>
</dbReference>
<dbReference type="GO" id="GO:0031625">
    <property type="term" value="F:ubiquitin protein ligase binding"/>
    <property type="evidence" value="ECO:0000318"/>
    <property type="project" value="GO_Central"/>
</dbReference>
<dbReference type="GO" id="GO:0043161">
    <property type="term" value="P:proteasome-mediated ubiquitin-dependent protein catabolic process"/>
    <property type="evidence" value="ECO:0000250"/>
    <property type="project" value="UniProtKB"/>
</dbReference>
<dbReference type="GO" id="GO:0016567">
    <property type="term" value="P:protein ubiquitination"/>
    <property type="evidence" value="ECO:0007669"/>
    <property type="project" value="UniProtKB-UniPathway"/>
</dbReference>
<dbReference type="GO" id="GO:0030162">
    <property type="term" value="P:regulation of proteolysis"/>
    <property type="evidence" value="ECO:0000318"/>
    <property type="project" value="GO_Central"/>
</dbReference>
<dbReference type="CDD" id="cd18518">
    <property type="entry name" value="BACK_SPOP"/>
    <property type="match status" value="1"/>
</dbReference>
<dbReference type="CDD" id="cd03774">
    <property type="entry name" value="MATH_SPOP"/>
    <property type="match status" value="1"/>
</dbReference>
<dbReference type="FunFam" id="2.60.210.10:FF:000028">
    <property type="entry name" value="Speckle-type POZ protein-like"/>
    <property type="match status" value="1"/>
</dbReference>
<dbReference type="FunFam" id="3.30.710.10:FF:000008">
    <property type="entry name" value="Speckle-type POZ protein-like a"/>
    <property type="match status" value="1"/>
</dbReference>
<dbReference type="Gene3D" id="6.10.250.3030">
    <property type="match status" value="1"/>
</dbReference>
<dbReference type="Gene3D" id="6.20.250.50">
    <property type="match status" value="1"/>
</dbReference>
<dbReference type="Gene3D" id="2.60.210.10">
    <property type="entry name" value="Apoptosis, Tumor Necrosis Factor Receptor Associated Protein 2, Chain A"/>
    <property type="match status" value="1"/>
</dbReference>
<dbReference type="Gene3D" id="3.30.710.10">
    <property type="entry name" value="Potassium Channel Kv1.1, Chain A"/>
    <property type="match status" value="1"/>
</dbReference>
<dbReference type="InterPro" id="IPR056423">
    <property type="entry name" value="BACK_BPM_SPOP"/>
</dbReference>
<dbReference type="InterPro" id="IPR000210">
    <property type="entry name" value="BTB/POZ_dom"/>
</dbReference>
<dbReference type="InterPro" id="IPR002083">
    <property type="entry name" value="MATH/TRAF_dom"/>
</dbReference>
<dbReference type="InterPro" id="IPR011333">
    <property type="entry name" value="SKP1/BTB/POZ_sf"/>
</dbReference>
<dbReference type="InterPro" id="IPR034089">
    <property type="entry name" value="SPOP_C"/>
</dbReference>
<dbReference type="InterPro" id="IPR008974">
    <property type="entry name" value="TRAF-like"/>
</dbReference>
<dbReference type="PANTHER" id="PTHR24413">
    <property type="entry name" value="SPECKLE-TYPE POZ PROTEIN"/>
    <property type="match status" value="1"/>
</dbReference>
<dbReference type="Pfam" id="PF24570">
    <property type="entry name" value="BACK_BPM_SPOP"/>
    <property type="match status" value="1"/>
</dbReference>
<dbReference type="Pfam" id="PF00651">
    <property type="entry name" value="BTB"/>
    <property type="match status" value="1"/>
</dbReference>
<dbReference type="Pfam" id="PF22486">
    <property type="entry name" value="MATH_2"/>
    <property type="match status" value="1"/>
</dbReference>
<dbReference type="SMART" id="SM00225">
    <property type="entry name" value="BTB"/>
    <property type="match status" value="1"/>
</dbReference>
<dbReference type="SMART" id="SM00061">
    <property type="entry name" value="MATH"/>
    <property type="match status" value="1"/>
</dbReference>
<dbReference type="SUPFAM" id="SSF54695">
    <property type="entry name" value="POZ domain"/>
    <property type="match status" value="1"/>
</dbReference>
<dbReference type="SUPFAM" id="SSF49599">
    <property type="entry name" value="TRAF domain-like"/>
    <property type="match status" value="1"/>
</dbReference>
<dbReference type="PROSITE" id="PS50097">
    <property type="entry name" value="BTB"/>
    <property type="match status" value="1"/>
</dbReference>
<dbReference type="PROSITE" id="PS50144">
    <property type="entry name" value="MATH"/>
    <property type="match status" value="1"/>
</dbReference>
<sequence>MSRVPSPPPPAEMTSGPVAESWCYTQIKVVKFSYMWTINNFSFCREEMGEVIKSSTFSSGANDKLKWCLRVNPKGLDEESKDYLSLYLLLVSCPKSEVRAKFKFSILNAKGEETKAMESQRAYRFVQGKDWGFKKFIRRDFLLDEANGLLPDDKLTLFCEVSVVQDSVNISGQNTMNMVKVPDCRLADELGGLWEHSRFTDCSLCVAGQEFQAHKAILAARSPVFSAMFEHEMEESKKNRVEINDVEAEVFKEMMFFIYTGKAPNLDKMADDLLAAADKYALERLKVMCEDALCTSLSVENAAEILILADLHSADQLKTQAVDFINYHASDVMETSGWKSMVASHPHLVAEAYRSLASAQCPFLGPPRKRLKQS</sequence>
<gene>
    <name type="primary">spop</name>
    <name type="ORF">zgc:64140</name>
</gene>
<organism>
    <name type="scientific">Danio rerio</name>
    <name type="common">Zebrafish</name>
    <name type="synonym">Brachydanio rerio</name>
    <dbReference type="NCBI Taxonomy" id="7955"/>
    <lineage>
        <taxon>Eukaryota</taxon>
        <taxon>Metazoa</taxon>
        <taxon>Chordata</taxon>
        <taxon>Craniata</taxon>
        <taxon>Vertebrata</taxon>
        <taxon>Euteleostomi</taxon>
        <taxon>Actinopterygii</taxon>
        <taxon>Neopterygii</taxon>
        <taxon>Teleostei</taxon>
        <taxon>Ostariophysi</taxon>
        <taxon>Cypriniformes</taxon>
        <taxon>Danionidae</taxon>
        <taxon>Danioninae</taxon>
        <taxon>Danio</taxon>
    </lineage>
</organism>
<evidence type="ECO:0000250" key="1"/>
<evidence type="ECO:0000255" key="2">
    <source>
        <dbReference type="PROSITE-ProRule" id="PRU00037"/>
    </source>
</evidence>
<evidence type="ECO:0000255" key="3">
    <source>
        <dbReference type="PROSITE-ProRule" id="PRU00129"/>
    </source>
</evidence>
<evidence type="ECO:0000305" key="4"/>
<reference key="1">
    <citation type="submission" date="2003-06" db="EMBL/GenBank/DDBJ databases">
        <authorList>
            <consortium name="NIH - Zebrafish Gene Collection (ZGC) project"/>
        </authorList>
    </citation>
    <scope>NUCLEOTIDE SEQUENCE [LARGE SCALE MRNA]</scope>
    <source>
        <tissue>Kidney</tissue>
    </source>
</reference>
<reference key="2">
    <citation type="journal article" date="2006" name="Dev. Cell">
        <title>A hedgehog-induced BTB protein modulates hedgehog signaling by degrading Ci/Gli transcription factor.</title>
        <authorList>
            <person name="Zhang Q."/>
            <person name="Zhang L."/>
            <person name="Wang B."/>
            <person name="Ou C.-Y."/>
            <person name="Chien C.-T."/>
            <person name="Jiang J."/>
        </authorList>
    </citation>
    <scope>IDENTIFICATION</scope>
</reference>
<protein>
    <recommendedName>
        <fullName>Speckle-type POZ protein</fullName>
    </recommendedName>
    <alternativeName>
        <fullName>HIB homolog 1</fullName>
    </alternativeName>
    <alternativeName>
        <fullName>SPOP1</fullName>
    </alternativeName>
</protein>
<accession>Q7T330</accession>
<name>SPOP_DANRE</name>
<keyword id="KW-0539">Nucleus</keyword>
<keyword id="KW-1185">Reference proteome</keyword>
<keyword id="KW-0833">Ubl conjugation pathway</keyword>